<feature type="signal peptide" evidence="2">
    <location>
        <begin position="1"/>
        <end position="21"/>
    </location>
</feature>
<feature type="chain" id="PRO_0000337296" description="Serine protease inhibitor Kazal-type 8">
    <location>
        <begin position="22"/>
        <end position="97"/>
    </location>
</feature>
<feature type="domain" description="Kazal-like" evidence="3">
    <location>
        <begin position="36"/>
        <end position="96"/>
    </location>
</feature>
<feature type="site" description="Reactive bond" evidence="3">
    <location>
        <begin position="51"/>
        <end position="52"/>
    </location>
</feature>
<feature type="glycosylation site" description="N-linked (GlcNAc...) asparagine" evidence="2">
    <location>
        <position position="85"/>
    </location>
</feature>
<feature type="disulfide bond" evidence="3">
    <location>
        <begin position="42"/>
        <end position="76"/>
    </location>
</feature>
<feature type="disulfide bond" evidence="3">
    <location>
        <begin position="49"/>
        <end position="73"/>
    </location>
</feature>
<feature type="disulfide bond" evidence="3">
    <location>
        <begin position="62"/>
        <end position="94"/>
    </location>
</feature>
<feature type="sequence variant" id="VAR_043978" description="In dbSNP:rs11718350.">
    <original>K</original>
    <variation>N</variation>
    <location>
        <position position="78"/>
    </location>
</feature>
<name>ISK8_HUMAN</name>
<evidence type="ECO:0000250" key="1"/>
<evidence type="ECO:0000255" key="2"/>
<evidence type="ECO:0000255" key="3">
    <source>
        <dbReference type="PROSITE-ProRule" id="PRU00798"/>
    </source>
</evidence>
<evidence type="ECO:0000305" key="4"/>
<organism>
    <name type="scientific">Homo sapiens</name>
    <name type="common">Human</name>
    <dbReference type="NCBI Taxonomy" id="9606"/>
    <lineage>
        <taxon>Eukaryota</taxon>
        <taxon>Metazoa</taxon>
        <taxon>Chordata</taxon>
        <taxon>Craniata</taxon>
        <taxon>Vertebrata</taxon>
        <taxon>Euteleostomi</taxon>
        <taxon>Mammalia</taxon>
        <taxon>Eutheria</taxon>
        <taxon>Euarchontoglires</taxon>
        <taxon>Primates</taxon>
        <taxon>Haplorrhini</taxon>
        <taxon>Catarrhini</taxon>
        <taxon>Hominidae</taxon>
        <taxon>Homo</taxon>
    </lineage>
</organism>
<proteinExistence type="inferred from homology"/>
<protein>
    <recommendedName>
        <fullName>Serine protease inhibitor Kazal-type 8</fullName>
    </recommendedName>
</protein>
<accession>P0C7L1</accession>
<comment type="function">
    <text evidence="1">Probable serine protease inhibitor.</text>
</comment>
<comment type="subcellular location">
    <subcellularLocation>
        <location evidence="4">Secreted</location>
    </subcellularLocation>
</comment>
<dbReference type="EMBL" id="AC105267">
    <property type="status" value="NOT_ANNOTATED_CDS"/>
    <property type="molecule type" value="Genomic_DNA"/>
</dbReference>
<dbReference type="EMBL" id="AW467501">
    <property type="status" value="NOT_ANNOTATED_CDS"/>
    <property type="molecule type" value="mRNA"/>
</dbReference>
<dbReference type="CCDS" id="CCDS46822.1"/>
<dbReference type="RefSeq" id="NP_001073994.1">
    <property type="nucleotide sequence ID" value="NM_001080525.3"/>
</dbReference>
<dbReference type="SMR" id="P0C7L1"/>
<dbReference type="FunCoup" id="P0C7L1">
    <property type="interactions" value="5"/>
</dbReference>
<dbReference type="STRING" id="9606.ENSP00000407497"/>
<dbReference type="GlyCosmos" id="P0C7L1">
    <property type="glycosylation" value="1 site, No reported glycans"/>
</dbReference>
<dbReference type="GlyGen" id="P0C7L1">
    <property type="glycosylation" value="1 site"/>
</dbReference>
<dbReference type="BioMuta" id="SPINK8"/>
<dbReference type="DMDM" id="189044781"/>
<dbReference type="PaxDb" id="9606-ENSP00000407497"/>
<dbReference type="Antibodypedia" id="56531">
    <property type="antibodies" value="59 antibodies from 14 providers"/>
</dbReference>
<dbReference type="DNASU" id="646424"/>
<dbReference type="Ensembl" id="ENST00000434006.3">
    <property type="protein sequence ID" value="ENSP00000407497.1"/>
    <property type="gene ID" value="ENSG00000229453.3"/>
</dbReference>
<dbReference type="GeneID" id="646424"/>
<dbReference type="KEGG" id="hsa:646424"/>
<dbReference type="MANE-Select" id="ENST00000434006.3">
    <property type="protein sequence ID" value="ENSP00000407497.1"/>
    <property type="RefSeq nucleotide sequence ID" value="NM_001080525.3"/>
    <property type="RefSeq protein sequence ID" value="NP_001073994.1"/>
</dbReference>
<dbReference type="UCSC" id="uc003csq.2">
    <property type="organism name" value="human"/>
</dbReference>
<dbReference type="AGR" id="HGNC:33160"/>
<dbReference type="CTD" id="646424"/>
<dbReference type="DisGeNET" id="646424"/>
<dbReference type="GeneCards" id="SPINK8"/>
<dbReference type="HGNC" id="HGNC:33160">
    <property type="gene designation" value="SPINK8"/>
</dbReference>
<dbReference type="HPA" id="ENSG00000229453">
    <property type="expression patterns" value="Group enriched (bone marrow, breast, fallopian tube, placenta)"/>
</dbReference>
<dbReference type="neXtProt" id="NX_P0C7L1"/>
<dbReference type="OpenTargets" id="ENSG00000229453"/>
<dbReference type="PharmGKB" id="PA162404546"/>
<dbReference type="VEuPathDB" id="HostDB:ENSG00000229453"/>
<dbReference type="eggNOG" id="ENOG502TDVY">
    <property type="taxonomic scope" value="Eukaryota"/>
</dbReference>
<dbReference type="GeneTree" id="ENSGT00520000060726"/>
<dbReference type="HOGENOM" id="CLU_2346133_0_0_1"/>
<dbReference type="InParanoid" id="P0C7L1"/>
<dbReference type="OMA" id="YDGPCEN"/>
<dbReference type="OrthoDB" id="126772at2759"/>
<dbReference type="PAN-GO" id="P0C7L1">
    <property type="GO annotations" value="0 GO annotations based on evolutionary models"/>
</dbReference>
<dbReference type="PhylomeDB" id="P0C7L1"/>
<dbReference type="PathwayCommons" id="P0C7L1"/>
<dbReference type="SignaLink" id="P0C7L1"/>
<dbReference type="BioGRID-ORCS" id="646424">
    <property type="hits" value="8 hits in 1140 CRISPR screens"/>
</dbReference>
<dbReference type="GenomeRNAi" id="646424"/>
<dbReference type="Pharos" id="P0C7L1">
    <property type="development level" value="Tdark"/>
</dbReference>
<dbReference type="PRO" id="PR:P0C7L1"/>
<dbReference type="Proteomes" id="UP000005640">
    <property type="component" value="Chromosome 3"/>
</dbReference>
<dbReference type="RNAct" id="P0C7L1">
    <property type="molecule type" value="protein"/>
</dbReference>
<dbReference type="Bgee" id="ENSG00000229453">
    <property type="expression patterns" value="Expressed in male germ line stem cell (sensu Vertebrata) in testis and 78 other cell types or tissues"/>
</dbReference>
<dbReference type="GO" id="GO:0005576">
    <property type="term" value="C:extracellular region"/>
    <property type="evidence" value="ECO:0007669"/>
    <property type="project" value="UniProtKB-SubCell"/>
</dbReference>
<dbReference type="GO" id="GO:0004867">
    <property type="term" value="F:serine-type endopeptidase inhibitor activity"/>
    <property type="evidence" value="ECO:0007669"/>
    <property type="project" value="UniProtKB-KW"/>
</dbReference>
<dbReference type="Gene3D" id="3.30.60.30">
    <property type="match status" value="1"/>
</dbReference>
<dbReference type="InterPro" id="IPR002350">
    <property type="entry name" value="Kazal_dom"/>
</dbReference>
<dbReference type="InterPro" id="IPR036058">
    <property type="entry name" value="Kazal_dom_sf"/>
</dbReference>
<dbReference type="PANTHER" id="PTHR21312">
    <property type="entry name" value="SERINE PROTEASE INHIBITOR"/>
    <property type="match status" value="1"/>
</dbReference>
<dbReference type="PANTHER" id="PTHR21312:SF37">
    <property type="entry name" value="SERINE PROTEASE INHIBITOR KAZAL-TYPE 8"/>
    <property type="match status" value="1"/>
</dbReference>
<dbReference type="Pfam" id="PF00050">
    <property type="entry name" value="Kazal_1"/>
    <property type="match status" value="1"/>
</dbReference>
<dbReference type="SMART" id="SM00280">
    <property type="entry name" value="KAZAL"/>
    <property type="match status" value="1"/>
</dbReference>
<dbReference type="SUPFAM" id="SSF100895">
    <property type="entry name" value="Kazal-type serine protease inhibitors"/>
    <property type="match status" value="1"/>
</dbReference>
<dbReference type="PROSITE" id="PS51465">
    <property type="entry name" value="KAZAL_2"/>
    <property type="match status" value="1"/>
</dbReference>
<gene>
    <name type="primary">SPINK8</name>
</gene>
<sequence length="97" mass="10821">MKGICSDAILVLATSMWMAFAIDFPLPMASERGQLDKTIVECLKNVNKCWFLSYIKPSEPICGSDQVTYSSDCHLCSKILFEGLNITKLYDGQCENS</sequence>
<reference key="1">
    <citation type="journal article" date="2006" name="Nature">
        <title>The DNA sequence, annotation and analysis of human chromosome 3.</title>
        <authorList>
            <person name="Muzny D.M."/>
            <person name="Scherer S.E."/>
            <person name="Kaul R."/>
            <person name="Wang J."/>
            <person name="Yu J."/>
            <person name="Sudbrak R."/>
            <person name="Buhay C.J."/>
            <person name="Chen R."/>
            <person name="Cree A."/>
            <person name="Ding Y."/>
            <person name="Dugan-Rocha S."/>
            <person name="Gill R."/>
            <person name="Gunaratne P."/>
            <person name="Harris R.A."/>
            <person name="Hawes A.C."/>
            <person name="Hernandez J."/>
            <person name="Hodgson A.V."/>
            <person name="Hume J."/>
            <person name="Jackson A."/>
            <person name="Khan Z.M."/>
            <person name="Kovar-Smith C."/>
            <person name="Lewis L.R."/>
            <person name="Lozado R.J."/>
            <person name="Metzker M.L."/>
            <person name="Milosavljevic A."/>
            <person name="Miner G.R."/>
            <person name="Morgan M.B."/>
            <person name="Nazareth L.V."/>
            <person name="Scott G."/>
            <person name="Sodergren E."/>
            <person name="Song X.-Z."/>
            <person name="Steffen D."/>
            <person name="Wei S."/>
            <person name="Wheeler D.A."/>
            <person name="Wright M.W."/>
            <person name="Worley K.C."/>
            <person name="Yuan Y."/>
            <person name="Zhang Z."/>
            <person name="Adams C.Q."/>
            <person name="Ansari-Lari M.A."/>
            <person name="Ayele M."/>
            <person name="Brown M.J."/>
            <person name="Chen G."/>
            <person name="Chen Z."/>
            <person name="Clendenning J."/>
            <person name="Clerc-Blankenburg K.P."/>
            <person name="Chen R."/>
            <person name="Chen Z."/>
            <person name="Davis C."/>
            <person name="Delgado O."/>
            <person name="Dinh H.H."/>
            <person name="Dong W."/>
            <person name="Draper H."/>
            <person name="Ernst S."/>
            <person name="Fu G."/>
            <person name="Gonzalez-Garay M.L."/>
            <person name="Garcia D.K."/>
            <person name="Gillett W."/>
            <person name="Gu J."/>
            <person name="Hao B."/>
            <person name="Haugen E."/>
            <person name="Havlak P."/>
            <person name="He X."/>
            <person name="Hennig S."/>
            <person name="Hu S."/>
            <person name="Huang W."/>
            <person name="Jackson L.R."/>
            <person name="Jacob L.S."/>
            <person name="Kelly S.H."/>
            <person name="Kube M."/>
            <person name="Levy R."/>
            <person name="Li Z."/>
            <person name="Liu B."/>
            <person name="Liu J."/>
            <person name="Liu W."/>
            <person name="Lu J."/>
            <person name="Maheshwari M."/>
            <person name="Nguyen B.-V."/>
            <person name="Okwuonu G.O."/>
            <person name="Palmeiri A."/>
            <person name="Pasternak S."/>
            <person name="Perez L.M."/>
            <person name="Phelps K.A."/>
            <person name="Plopper F.J."/>
            <person name="Qiang B."/>
            <person name="Raymond C."/>
            <person name="Rodriguez R."/>
            <person name="Saenphimmachak C."/>
            <person name="Santibanez J."/>
            <person name="Shen H."/>
            <person name="Shen Y."/>
            <person name="Subramanian S."/>
            <person name="Tabor P.E."/>
            <person name="Verduzco D."/>
            <person name="Waldron L."/>
            <person name="Wang J."/>
            <person name="Wang J."/>
            <person name="Wang Q."/>
            <person name="Williams G.A."/>
            <person name="Wong G.K.-S."/>
            <person name="Yao Z."/>
            <person name="Zhang J."/>
            <person name="Zhang X."/>
            <person name="Zhao G."/>
            <person name="Zhou J."/>
            <person name="Zhou Y."/>
            <person name="Nelson D."/>
            <person name="Lehrach H."/>
            <person name="Reinhardt R."/>
            <person name="Naylor S.L."/>
            <person name="Yang H."/>
            <person name="Olson M."/>
            <person name="Weinstock G."/>
            <person name="Gibbs R.A."/>
        </authorList>
    </citation>
    <scope>NUCLEOTIDE SEQUENCE [LARGE SCALE GENOMIC DNA]</scope>
</reference>
<reference key="2">
    <citation type="journal article" date="2004" name="Genome Res.">
        <title>The status, quality, and expansion of the NIH full-length cDNA project: the Mammalian Gene Collection (MGC).</title>
        <authorList>
            <consortium name="The MGC Project Team"/>
        </authorList>
    </citation>
    <scope>NUCLEOTIDE SEQUENCE [LARGE SCALE MRNA] OF 9-97</scope>
    <source>
        <tissue>Myeloid</tissue>
    </source>
</reference>
<keyword id="KW-1015">Disulfide bond</keyword>
<keyword id="KW-0325">Glycoprotein</keyword>
<keyword id="KW-0646">Protease inhibitor</keyword>
<keyword id="KW-1185">Reference proteome</keyword>
<keyword id="KW-0677">Repeat</keyword>
<keyword id="KW-0964">Secreted</keyword>
<keyword id="KW-0722">Serine protease inhibitor</keyword>
<keyword id="KW-0732">Signal</keyword>